<comment type="function">
    <text evidence="1">Catalyzes the hydrolysis of 3-deoxy-D-manno-octulosonate 8-phosphate (KDO 8-P) to 3-deoxy-D-manno-octulosonate (KDO) and inorganic phosphate.</text>
</comment>
<comment type="catalytic activity">
    <reaction evidence="1">
        <text>3-deoxy-alpha-D-manno-2-octulosonate-8-phosphate + H2O = 3-deoxy-alpha-D-manno-oct-2-ulosonate + phosphate</text>
        <dbReference type="Rhea" id="RHEA:11500"/>
        <dbReference type="ChEBI" id="CHEBI:15377"/>
        <dbReference type="ChEBI" id="CHEBI:43474"/>
        <dbReference type="ChEBI" id="CHEBI:85985"/>
        <dbReference type="ChEBI" id="CHEBI:85986"/>
        <dbReference type="EC" id="3.1.3.45"/>
    </reaction>
</comment>
<comment type="cofactor">
    <cofactor evidence="1">
        <name>Mg(2+)</name>
        <dbReference type="ChEBI" id="CHEBI:18420"/>
    </cofactor>
</comment>
<comment type="pathway">
    <text evidence="1">Carbohydrate biosynthesis; 3-deoxy-D-manno-octulosonate biosynthesis; 3-deoxy-D-manno-octulosonate from D-ribulose 5-phosphate: step 3/3.</text>
</comment>
<comment type="pathway">
    <text evidence="1">Bacterial outer membrane biogenesis; lipopolysaccharide biosynthesis.</text>
</comment>
<comment type="subunit">
    <text evidence="1">Homotetramer.</text>
</comment>
<comment type="similarity">
    <text evidence="3">Belongs to the KdsC family.</text>
</comment>
<keyword id="KW-0002">3D-structure</keyword>
<keyword id="KW-0378">Hydrolase</keyword>
<keyword id="KW-0448">Lipopolysaccharide biosynthesis</keyword>
<keyword id="KW-0460">Magnesium</keyword>
<keyword id="KW-0479">Metal-binding</keyword>
<keyword id="KW-1185">Reference proteome</keyword>
<accession>Q8ZB47</accession>
<accession>Q0WB73</accession>
<dbReference type="EC" id="3.1.3.45" evidence="1"/>
<dbReference type="EMBL" id="AL590842">
    <property type="protein sequence ID" value="CAL22166.1"/>
    <property type="molecule type" value="Genomic_DNA"/>
</dbReference>
<dbReference type="EMBL" id="AE009952">
    <property type="protein sequence ID" value="AAM83744.1"/>
    <property type="molecule type" value="Genomic_DNA"/>
</dbReference>
<dbReference type="EMBL" id="AE017042">
    <property type="protein sequence ID" value="AAS63980.1"/>
    <property type="molecule type" value="Genomic_DNA"/>
</dbReference>
<dbReference type="PIR" id="AC0435">
    <property type="entry name" value="AC0435"/>
</dbReference>
<dbReference type="RefSeq" id="WP_002228203.1">
    <property type="nucleotide sequence ID" value="NZ_WUCM01000032.1"/>
</dbReference>
<dbReference type="RefSeq" id="YP_002348465.1">
    <property type="nucleotide sequence ID" value="NC_003143.1"/>
</dbReference>
<dbReference type="PDB" id="3IJ5">
    <property type="method" value="X-ray"/>
    <property type="resolution" value="1.95 A"/>
    <property type="chains" value="A/B/C/D=1-187"/>
</dbReference>
<dbReference type="PDBsum" id="3IJ5"/>
<dbReference type="SMR" id="Q8ZB47"/>
<dbReference type="STRING" id="214092.YPO3578"/>
<dbReference type="PaxDb" id="214092-YPO3578"/>
<dbReference type="DNASU" id="1145097"/>
<dbReference type="EnsemblBacteria" id="AAS63980">
    <property type="protein sequence ID" value="AAS63980"/>
    <property type="gene ID" value="YP_3833"/>
</dbReference>
<dbReference type="GeneID" id="57975137"/>
<dbReference type="KEGG" id="ype:YPO3578"/>
<dbReference type="KEGG" id="ypk:y0150"/>
<dbReference type="KEGG" id="ypm:YP_3833"/>
<dbReference type="PATRIC" id="fig|214092.21.peg.4072"/>
<dbReference type="eggNOG" id="COG1778">
    <property type="taxonomic scope" value="Bacteria"/>
</dbReference>
<dbReference type="HOGENOM" id="CLU_106694_0_1_6"/>
<dbReference type="OMA" id="GMTLWQK"/>
<dbReference type="OrthoDB" id="9805604at2"/>
<dbReference type="UniPathway" id="UPA00030"/>
<dbReference type="UniPathway" id="UPA00357">
    <property type="reaction ID" value="UER00475"/>
</dbReference>
<dbReference type="EvolutionaryTrace" id="Q8ZB47"/>
<dbReference type="Proteomes" id="UP000000815">
    <property type="component" value="Chromosome"/>
</dbReference>
<dbReference type="Proteomes" id="UP000001019">
    <property type="component" value="Chromosome"/>
</dbReference>
<dbReference type="Proteomes" id="UP000002490">
    <property type="component" value="Chromosome"/>
</dbReference>
<dbReference type="GO" id="GO:0019143">
    <property type="term" value="F:3-deoxy-manno-octulosonate-8-phosphatase activity"/>
    <property type="evidence" value="ECO:0007669"/>
    <property type="project" value="UniProtKB-EC"/>
</dbReference>
<dbReference type="GO" id="GO:0046872">
    <property type="term" value="F:metal ion binding"/>
    <property type="evidence" value="ECO:0007669"/>
    <property type="project" value="UniProtKB-KW"/>
</dbReference>
<dbReference type="GO" id="GO:0009103">
    <property type="term" value="P:lipopolysaccharide biosynthetic process"/>
    <property type="evidence" value="ECO:0007669"/>
    <property type="project" value="UniProtKB-UniPathway"/>
</dbReference>
<dbReference type="CDD" id="cd01630">
    <property type="entry name" value="HAD_KDO-like"/>
    <property type="match status" value="1"/>
</dbReference>
<dbReference type="FunFam" id="3.40.50.1000:FF:000029">
    <property type="entry name" value="3-deoxy-D-manno-octulosonate 8-phosphate phosphatase KdsC"/>
    <property type="match status" value="1"/>
</dbReference>
<dbReference type="Gene3D" id="3.40.50.1000">
    <property type="entry name" value="HAD superfamily/HAD-like"/>
    <property type="match status" value="1"/>
</dbReference>
<dbReference type="InterPro" id="IPR050793">
    <property type="entry name" value="CMP-NeuNAc_synthase"/>
</dbReference>
<dbReference type="InterPro" id="IPR036412">
    <property type="entry name" value="HAD-like_sf"/>
</dbReference>
<dbReference type="InterPro" id="IPR023214">
    <property type="entry name" value="HAD_sf"/>
</dbReference>
<dbReference type="InterPro" id="IPR010023">
    <property type="entry name" value="KdsC_fam"/>
</dbReference>
<dbReference type="NCBIfam" id="TIGR01670">
    <property type="entry name" value="KdsC-phosphatas"/>
    <property type="match status" value="1"/>
</dbReference>
<dbReference type="NCBIfam" id="NF007019">
    <property type="entry name" value="PRK09484.1"/>
    <property type="match status" value="1"/>
</dbReference>
<dbReference type="PANTHER" id="PTHR21485">
    <property type="entry name" value="HAD SUPERFAMILY MEMBERS CMAS AND KDSC"/>
    <property type="match status" value="1"/>
</dbReference>
<dbReference type="PANTHER" id="PTHR21485:SF6">
    <property type="entry name" value="N-ACYLNEURAMINATE CYTIDYLYLTRANSFERASE-RELATED"/>
    <property type="match status" value="1"/>
</dbReference>
<dbReference type="Pfam" id="PF08282">
    <property type="entry name" value="Hydrolase_3"/>
    <property type="match status" value="1"/>
</dbReference>
<dbReference type="PIRSF" id="PIRSF006118">
    <property type="entry name" value="KDO8-P_Ptase"/>
    <property type="match status" value="1"/>
</dbReference>
<dbReference type="SFLD" id="SFLDG01138">
    <property type="entry name" value="C1.6.2:_Deoxy-d-mannose-octulo"/>
    <property type="match status" value="1"/>
</dbReference>
<dbReference type="SFLD" id="SFLDG01136">
    <property type="entry name" value="C1.6:_Phosphoserine_Phosphatas"/>
    <property type="match status" value="1"/>
</dbReference>
<dbReference type="SUPFAM" id="SSF56784">
    <property type="entry name" value="HAD-like"/>
    <property type="match status" value="1"/>
</dbReference>
<sequence>MSNTAYIDTCYGPVADDVIQRAANIRLLICDVDGVMSDGLIYMGNQGEELKAFNVRDGYGIRCLITSDIDVAIITGRRAKLLEDRANTLGITHLYQGQSDKLVAYHELLATLQCQPEQVAYIGDDLIDWPVMAQVGLSVAVADAHPLLLPKAHYVTRIKGGRGAVREVCDLILLAQDKLEGATGLSI</sequence>
<organism>
    <name type="scientific">Yersinia pestis</name>
    <dbReference type="NCBI Taxonomy" id="632"/>
    <lineage>
        <taxon>Bacteria</taxon>
        <taxon>Pseudomonadati</taxon>
        <taxon>Pseudomonadota</taxon>
        <taxon>Gammaproteobacteria</taxon>
        <taxon>Enterobacterales</taxon>
        <taxon>Yersiniaceae</taxon>
        <taxon>Yersinia</taxon>
    </lineage>
</organism>
<gene>
    <name type="primary">kdsC</name>
    <name type="ordered locus">YPO3578</name>
    <name type="ordered locus">y0150</name>
    <name type="ordered locus">YP_3833</name>
</gene>
<evidence type="ECO:0000250" key="1">
    <source>
        <dbReference type="UniProtKB" id="A0A140N5J7"/>
    </source>
</evidence>
<evidence type="ECO:0000250" key="2">
    <source>
        <dbReference type="UniProtKB" id="P67653"/>
    </source>
</evidence>
<evidence type="ECO:0000305" key="3"/>
<evidence type="ECO:0007829" key="4">
    <source>
        <dbReference type="PDB" id="3IJ5"/>
    </source>
</evidence>
<feature type="chain" id="PRO_0000201702" description="3-deoxy-D-manno-octulosonate 8-phosphate phosphatase KdsC">
    <location>
        <begin position="1"/>
        <end position="187"/>
    </location>
</feature>
<feature type="binding site" evidence="2">
    <location>
        <position position="31"/>
    </location>
    <ligand>
        <name>Mg(2+)</name>
        <dbReference type="ChEBI" id="CHEBI:18420"/>
    </ligand>
</feature>
<feature type="binding site" evidence="2">
    <location>
        <position position="33"/>
    </location>
    <ligand>
        <name>Mg(2+)</name>
        <dbReference type="ChEBI" id="CHEBI:18420"/>
    </ligand>
</feature>
<feature type="binding site" evidence="2">
    <location>
        <position position="33"/>
    </location>
    <ligand>
        <name>substrate</name>
    </ligand>
</feature>
<feature type="binding site" evidence="2">
    <location>
        <begin position="54"/>
        <end position="58"/>
    </location>
    <ligand>
        <name>substrate</name>
    </ligand>
</feature>
<feature type="binding site" evidence="2">
    <location>
        <position position="62"/>
    </location>
    <ligand>
        <name>substrate</name>
    </ligand>
</feature>
<feature type="binding site" evidence="2">
    <location>
        <position position="77"/>
    </location>
    <ligand>
        <name>substrate</name>
    </ligand>
</feature>
<feature type="binding site" evidence="2">
    <location>
        <position position="85"/>
    </location>
    <ligand>
        <name>substrate</name>
    </ligand>
</feature>
<feature type="binding site" evidence="2">
    <location>
        <position position="101"/>
    </location>
    <ligand>
        <name>substrate</name>
    </ligand>
</feature>
<feature type="binding site" evidence="2">
    <location>
        <position position="124"/>
    </location>
    <ligand>
        <name>Mg(2+)</name>
        <dbReference type="ChEBI" id="CHEBI:18420"/>
    </ligand>
</feature>
<feature type="helix" evidence="4">
    <location>
        <begin position="16"/>
        <end position="22"/>
    </location>
</feature>
<feature type="strand" evidence="4">
    <location>
        <begin position="26"/>
        <end position="30"/>
    </location>
</feature>
<feature type="turn" evidence="4">
    <location>
        <begin position="33"/>
        <end position="35"/>
    </location>
</feature>
<feature type="strand" evidence="4">
    <location>
        <begin position="36"/>
        <end position="44"/>
    </location>
</feature>
<feature type="strand" evidence="4">
    <location>
        <begin position="49"/>
        <end position="54"/>
    </location>
</feature>
<feature type="helix" evidence="4">
    <location>
        <begin position="55"/>
        <end position="66"/>
    </location>
</feature>
<feature type="strand" evidence="4">
    <location>
        <begin position="70"/>
        <end position="74"/>
    </location>
</feature>
<feature type="helix" evidence="4">
    <location>
        <begin position="80"/>
        <end position="89"/>
    </location>
</feature>
<feature type="strand" evidence="4">
    <location>
        <begin position="93"/>
        <end position="95"/>
    </location>
</feature>
<feature type="helix" evidence="4">
    <location>
        <begin position="101"/>
        <end position="112"/>
    </location>
</feature>
<feature type="helix" evidence="4">
    <location>
        <begin position="116"/>
        <end position="118"/>
    </location>
</feature>
<feature type="strand" evidence="4">
    <location>
        <begin position="119"/>
        <end position="123"/>
    </location>
</feature>
<feature type="helix" evidence="4">
    <location>
        <begin position="126"/>
        <end position="128"/>
    </location>
</feature>
<feature type="helix" evidence="4">
    <location>
        <begin position="129"/>
        <end position="132"/>
    </location>
</feature>
<feature type="strand" evidence="4">
    <location>
        <begin position="135"/>
        <end position="140"/>
    </location>
</feature>
<feature type="turn" evidence="4">
    <location>
        <begin position="146"/>
        <end position="148"/>
    </location>
</feature>
<feature type="helix" evidence="4">
    <location>
        <begin position="149"/>
        <end position="151"/>
    </location>
</feature>
<feature type="strand" evidence="4">
    <location>
        <begin position="152"/>
        <end position="155"/>
    </location>
</feature>
<feature type="turn" evidence="4">
    <location>
        <begin position="160"/>
        <end position="163"/>
    </location>
</feature>
<feature type="helix" evidence="4">
    <location>
        <begin position="164"/>
        <end position="175"/>
    </location>
</feature>
<feature type="turn" evidence="4">
    <location>
        <begin position="179"/>
        <end position="181"/>
    </location>
</feature>
<name>KDSC_YERPE</name>
<reference key="1">
    <citation type="journal article" date="2001" name="Nature">
        <title>Genome sequence of Yersinia pestis, the causative agent of plague.</title>
        <authorList>
            <person name="Parkhill J."/>
            <person name="Wren B.W."/>
            <person name="Thomson N.R."/>
            <person name="Titball R.W."/>
            <person name="Holden M.T.G."/>
            <person name="Prentice M.B."/>
            <person name="Sebaihia M."/>
            <person name="James K.D."/>
            <person name="Churcher C.M."/>
            <person name="Mungall K.L."/>
            <person name="Baker S."/>
            <person name="Basham D."/>
            <person name="Bentley S.D."/>
            <person name="Brooks K."/>
            <person name="Cerdeno-Tarraga A.-M."/>
            <person name="Chillingworth T."/>
            <person name="Cronin A."/>
            <person name="Davies R.M."/>
            <person name="Davis P."/>
            <person name="Dougan G."/>
            <person name="Feltwell T."/>
            <person name="Hamlin N."/>
            <person name="Holroyd S."/>
            <person name="Jagels K."/>
            <person name="Karlyshev A.V."/>
            <person name="Leather S."/>
            <person name="Moule S."/>
            <person name="Oyston P.C.F."/>
            <person name="Quail M.A."/>
            <person name="Rutherford K.M."/>
            <person name="Simmonds M."/>
            <person name="Skelton J."/>
            <person name="Stevens K."/>
            <person name="Whitehead S."/>
            <person name="Barrell B.G."/>
        </authorList>
    </citation>
    <scope>NUCLEOTIDE SEQUENCE [LARGE SCALE GENOMIC DNA]</scope>
    <source>
        <strain>CO-92 / Biovar Orientalis</strain>
    </source>
</reference>
<reference key="2">
    <citation type="journal article" date="2002" name="J. Bacteriol.">
        <title>Genome sequence of Yersinia pestis KIM.</title>
        <authorList>
            <person name="Deng W."/>
            <person name="Burland V."/>
            <person name="Plunkett G. III"/>
            <person name="Boutin A."/>
            <person name="Mayhew G.F."/>
            <person name="Liss P."/>
            <person name="Perna N.T."/>
            <person name="Rose D.J."/>
            <person name="Mau B."/>
            <person name="Zhou S."/>
            <person name="Schwartz D.C."/>
            <person name="Fetherston J.D."/>
            <person name="Lindler L.E."/>
            <person name="Brubaker R.R."/>
            <person name="Plano G.V."/>
            <person name="Straley S.C."/>
            <person name="McDonough K.A."/>
            <person name="Nilles M.L."/>
            <person name="Matson J.S."/>
            <person name="Blattner F.R."/>
            <person name="Perry R.D."/>
        </authorList>
    </citation>
    <scope>NUCLEOTIDE SEQUENCE [LARGE SCALE GENOMIC DNA]</scope>
    <source>
        <strain>KIM10+ / Biovar Mediaevalis</strain>
    </source>
</reference>
<reference key="3">
    <citation type="journal article" date="2004" name="DNA Res.">
        <title>Complete genome sequence of Yersinia pestis strain 91001, an isolate avirulent to humans.</title>
        <authorList>
            <person name="Song Y."/>
            <person name="Tong Z."/>
            <person name="Wang J."/>
            <person name="Wang L."/>
            <person name="Guo Z."/>
            <person name="Han Y."/>
            <person name="Zhang J."/>
            <person name="Pei D."/>
            <person name="Zhou D."/>
            <person name="Qin H."/>
            <person name="Pang X."/>
            <person name="Han Y."/>
            <person name="Zhai J."/>
            <person name="Li M."/>
            <person name="Cui B."/>
            <person name="Qi Z."/>
            <person name="Jin L."/>
            <person name="Dai R."/>
            <person name="Chen F."/>
            <person name="Li S."/>
            <person name="Ye C."/>
            <person name="Du Z."/>
            <person name="Lin W."/>
            <person name="Wang J."/>
            <person name="Yu J."/>
            <person name="Yang H."/>
            <person name="Wang J."/>
            <person name="Huang P."/>
            <person name="Yang R."/>
        </authorList>
    </citation>
    <scope>NUCLEOTIDE SEQUENCE [LARGE SCALE GENOMIC DNA]</scope>
    <source>
        <strain>91001 / Biovar Mediaevalis</strain>
    </source>
</reference>
<reference key="4">
    <citation type="submission" date="2009-08" db="PDB data bank">
        <title>1.95 angstrom resolution crystal structure of 3-deoxy-d- manno-octulosonate 8-phosphate phosphatase from Yersinia pestis.</title>
        <authorList>
            <person name="Papazisi L."/>
            <person name="Anderson W.F."/>
        </authorList>
    </citation>
    <scope>X-RAY CRYSTALLOGRAPHY (1.95 ANGSTROMS)</scope>
    <scope>SUBUNIT</scope>
</reference>
<protein>
    <recommendedName>
        <fullName>3-deoxy-D-manno-octulosonate 8-phosphate phosphatase KdsC</fullName>
        <ecNumber evidence="1">3.1.3.45</ecNumber>
    </recommendedName>
    <alternativeName>
        <fullName>KDO 8-P phosphatase</fullName>
    </alternativeName>
</protein>
<proteinExistence type="evidence at protein level"/>